<evidence type="ECO:0000255" key="1">
    <source>
        <dbReference type="HAMAP-Rule" id="MF_00575"/>
    </source>
</evidence>
<feature type="chain" id="PRO_0000214106" description="UDP-2,3-diacylglucosamine hydrolase">
    <location>
        <begin position="1"/>
        <end position="237"/>
    </location>
</feature>
<feature type="binding site" evidence="1">
    <location>
        <position position="8"/>
    </location>
    <ligand>
        <name>Mn(2+)</name>
        <dbReference type="ChEBI" id="CHEBI:29035"/>
        <label>1</label>
    </ligand>
</feature>
<feature type="binding site" evidence="1">
    <location>
        <position position="10"/>
    </location>
    <ligand>
        <name>Mn(2+)</name>
        <dbReference type="ChEBI" id="CHEBI:29035"/>
        <label>1</label>
    </ligand>
</feature>
<feature type="binding site" evidence="1">
    <location>
        <position position="41"/>
    </location>
    <ligand>
        <name>Mn(2+)</name>
        <dbReference type="ChEBI" id="CHEBI:29035"/>
        <label>1</label>
    </ligand>
</feature>
<feature type="binding site" evidence="1">
    <location>
        <position position="41"/>
    </location>
    <ligand>
        <name>Mn(2+)</name>
        <dbReference type="ChEBI" id="CHEBI:29035"/>
        <label>2</label>
    </ligand>
</feature>
<feature type="binding site" evidence="1">
    <location>
        <begin position="78"/>
        <end position="79"/>
    </location>
    <ligand>
        <name>substrate</name>
    </ligand>
</feature>
<feature type="binding site" evidence="1">
    <location>
        <position position="78"/>
    </location>
    <ligand>
        <name>Mn(2+)</name>
        <dbReference type="ChEBI" id="CHEBI:29035"/>
        <label>2</label>
    </ligand>
</feature>
<feature type="binding site" evidence="1">
    <location>
        <position position="113"/>
    </location>
    <ligand>
        <name>Mn(2+)</name>
        <dbReference type="ChEBI" id="CHEBI:29035"/>
        <label>2</label>
    </ligand>
</feature>
<feature type="binding site" evidence="1">
    <location>
        <position position="121"/>
    </location>
    <ligand>
        <name>substrate</name>
    </ligand>
</feature>
<feature type="binding site" evidence="1">
    <location>
        <position position="159"/>
    </location>
    <ligand>
        <name>substrate</name>
    </ligand>
</feature>
<feature type="binding site" evidence="1">
    <location>
        <position position="164"/>
    </location>
    <ligand>
        <name>substrate</name>
    </ligand>
</feature>
<feature type="binding site" evidence="1">
    <location>
        <position position="195"/>
    </location>
    <ligand>
        <name>Mn(2+)</name>
        <dbReference type="ChEBI" id="CHEBI:29035"/>
        <label>2</label>
    </ligand>
</feature>
<feature type="binding site" evidence="1">
    <location>
        <position position="195"/>
    </location>
    <ligand>
        <name>substrate</name>
    </ligand>
</feature>
<feature type="binding site" evidence="1">
    <location>
        <position position="197"/>
    </location>
    <ligand>
        <name>Mn(2+)</name>
        <dbReference type="ChEBI" id="CHEBI:29035"/>
        <label>1</label>
    </ligand>
</feature>
<name>LPXH_CHRVO</name>
<proteinExistence type="inferred from homology"/>
<accession>Q7NT75</accession>
<reference key="1">
    <citation type="journal article" date="2003" name="Proc. Natl. Acad. Sci. U.S.A.">
        <title>The complete genome sequence of Chromobacterium violaceum reveals remarkable and exploitable bacterial adaptability.</title>
        <authorList>
            <person name="Vasconcelos A.T.R."/>
            <person name="de Almeida D.F."/>
            <person name="Hungria M."/>
            <person name="Guimaraes C.T."/>
            <person name="Antonio R.V."/>
            <person name="Almeida F.C."/>
            <person name="de Almeida L.G.P."/>
            <person name="de Almeida R."/>
            <person name="Alves-Gomes J.A."/>
            <person name="Andrade E.M."/>
            <person name="Araripe J."/>
            <person name="de Araujo M.F.F."/>
            <person name="Astolfi-Filho S."/>
            <person name="Azevedo V."/>
            <person name="Baptista A.J."/>
            <person name="Bataus L.A.M."/>
            <person name="Batista J.S."/>
            <person name="Belo A."/>
            <person name="van den Berg C."/>
            <person name="Bogo M."/>
            <person name="Bonatto S."/>
            <person name="Bordignon J."/>
            <person name="Brigido M.M."/>
            <person name="Brito C.A."/>
            <person name="Brocchi M."/>
            <person name="Burity H.A."/>
            <person name="Camargo A.A."/>
            <person name="Cardoso D.D.P."/>
            <person name="Carneiro N.P."/>
            <person name="Carraro D.M."/>
            <person name="Carvalho C.M.B."/>
            <person name="Cascardo J.C.M."/>
            <person name="Cavada B.S."/>
            <person name="Chueire L.M.O."/>
            <person name="Creczynski-Pasa T.B."/>
            <person name="Cunha-Junior N.C."/>
            <person name="Fagundes N."/>
            <person name="Falcao C.L."/>
            <person name="Fantinatti F."/>
            <person name="Farias I.P."/>
            <person name="Felipe M.S.S."/>
            <person name="Ferrari L.P."/>
            <person name="Ferro J.A."/>
            <person name="Ferro M.I.T."/>
            <person name="Franco G.R."/>
            <person name="Freitas N.S.A."/>
            <person name="Furlan L.R."/>
            <person name="Gazzinelli R.T."/>
            <person name="Gomes E.A."/>
            <person name="Goncalves P.R."/>
            <person name="Grangeiro T.B."/>
            <person name="Grattapaglia D."/>
            <person name="Grisard E.C."/>
            <person name="Hanna E.S."/>
            <person name="Jardim S.N."/>
            <person name="Laurino J."/>
            <person name="Leoi L.C.T."/>
            <person name="Lima L.F.A."/>
            <person name="Loureiro M.F."/>
            <person name="Lyra M.C.C.P."/>
            <person name="Madeira H.M.F."/>
            <person name="Manfio G.P."/>
            <person name="Maranhao A.Q."/>
            <person name="Martins W.S."/>
            <person name="di Mauro S.M.Z."/>
            <person name="de Medeiros S.R.B."/>
            <person name="Meissner R.V."/>
            <person name="Moreira M.A.M."/>
            <person name="Nascimento F.F."/>
            <person name="Nicolas M.F."/>
            <person name="Oliveira J.G."/>
            <person name="Oliveira S.C."/>
            <person name="Paixao R.F.C."/>
            <person name="Parente J.A."/>
            <person name="Pedrosa F.O."/>
            <person name="Pena S.D.J."/>
            <person name="Pereira J.O."/>
            <person name="Pereira M."/>
            <person name="Pinto L.S.R.C."/>
            <person name="Pinto L.S."/>
            <person name="Porto J.I.R."/>
            <person name="Potrich D.P."/>
            <person name="Ramalho-Neto C.E."/>
            <person name="Reis A.M.M."/>
            <person name="Rigo L.U."/>
            <person name="Rondinelli E."/>
            <person name="Santos E.B.P."/>
            <person name="Santos F.R."/>
            <person name="Schneider M.P.C."/>
            <person name="Seuanez H.N."/>
            <person name="Silva A.M.R."/>
            <person name="da Silva A.L.C."/>
            <person name="Silva D.W."/>
            <person name="Silva R."/>
            <person name="Simoes I.C."/>
            <person name="Simon D."/>
            <person name="Soares C.M.A."/>
            <person name="Soares R.B.A."/>
            <person name="Souza E.M."/>
            <person name="Souza K.R.L."/>
            <person name="Souza R.C."/>
            <person name="Steffens M.B.R."/>
            <person name="Steindel M."/>
            <person name="Teixeira S.R."/>
            <person name="Urmenyi T."/>
            <person name="Vettore A."/>
            <person name="Wassem R."/>
            <person name="Zaha A."/>
            <person name="Simpson A.J.G."/>
        </authorList>
    </citation>
    <scope>NUCLEOTIDE SEQUENCE [LARGE SCALE GENOMIC DNA]</scope>
    <source>
        <strain>ATCC 12472 / DSM 30191 / JCM 1249 / CCUG 213 / NBRC 12614 / NCIMB 9131 / NCTC 9757 / MK</strain>
    </source>
</reference>
<keyword id="KW-0997">Cell inner membrane</keyword>
<keyword id="KW-1003">Cell membrane</keyword>
<keyword id="KW-0378">Hydrolase</keyword>
<keyword id="KW-0441">Lipid A biosynthesis</keyword>
<keyword id="KW-0444">Lipid biosynthesis</keyword>
<keyword id="KW-0443">Lipid metabolism</keyword>
<keyword id="KW-0464">Manganese</keyword>
<keyword id="KW-0472">Membrane</keyword>
<keyword id="KW-0479">Metal-binding</keyword>
<keyword id="KW-1185">Reference proteome</keyword>
<sequence length="237" mass="26325">MAIHFISDLHLADDTPALNQLFLDTLAAWRGRIAALYILGDLFEYWVGDDDDSPYLAAPLAAMRDFAAQTPLYVMRGNRDFLLGAGFEARSGARLLDDPTLIEAHGQRILLSHGDALCTDDAAYQQFRAMSRNPQWQQAMLAKPLAERHAIARHARAQSEMNKQQTGLTDISDVTENAVRELLAAHGWPTLIHGHTHRPAHHLHDASSRWVIQDWHGGRGGYLLLDDGGIRSLPLGN</sequence>
<dbReference type="EC" id="3.6.1.54" evidence="1"/>
<dbReference type="EMBL" id="AE016825">
    <property type="protein sequence ID" value="AAQ60852.1"/>
    <property type="molecule type" value="Genomic_DNA"/>
</dbReference>
<dbReference type="RefSeq" id="WP_011136733.1">
    <property type="nucleotide sequence ID" value="NC_005085.1"/>
</dbReference>
<dbReference type="SMR" id="Q7NT75"/>
<dbReference type="STRING" id="243365.CV_3186"/>
<dbReference type="KEGG" id="cvi:CV_3186"/>
<dbReference type="eggNOG" id="COG2908">
    <property type="taxonomic scope" value="Bacteria"/>
</dbReference>
<dbReference type="HOGENOM" id="CLU_074586_0_0_4"/>
<dbReference type="OrthoDB" id="9783283at2"/>
<dbReference type="UniPathway" id="UPA00359">
    <property type="reaction ID" value="UER00480"/>
</dbReference>
<dbReference type="Proteomes" id="UP000001424">
    <property type="component" value="Chromosome"/>
</dbReference>
<dbReference type="GO" id="GO:0005737">
    <property type="term" value="C:cytoplasm"/>
    <property type="evidence" value="ECO:0007669"/>
    <property type="project" value="InterPro"/>
</dbReference>
<dbReference type="GO" id="GO:0019897">
    <property type="term" value="C:extrinsic component of plasma membrane"/>
    <property type="evidence" value="ECO:0007669"/>
    <property type="project" value="UniProtKB-UniRule"/>
</dbReference>
<dbReference type="GO" id="GO:0030145">
    <property type="term" value="F:manganese ion binding"/>
    <property type="evidence" value="ECO:0007669"/>
    <property type="project" value="UniProtKB-UniRule"/>
</dbReference>
<dbReference type="GO" id="GO:0008758">
    <property type="term" value="F:UDP-2,3-diacylglucosamine hydrolase activity"/>
    <property type="evidence" value="ECO:0007669"/>
    <property type="project" value="UniProtKB-UniRule"/>
</dbReference>
<dbReference type="GO" id="GO:0009245">
    <property type="term" value="P:lipid A biosynthetic process"/>
    <property type="evidence" value="ECO:0007669"/>
    <property type="project" value="UniProtKB-UniRule"/>
</dbReference>
<dbReference type="CDD" id="cd07398">
    <property type="entry name" value="MPP_YbbF-LpxH"/>
    <property type="match status" value="1"/>
</dbReference>
<dbReference type="Gene3D" id="3.60.21.10">
    <property type="match status" value="1"/>
</dbReference>
<dbReference type="HAMAP" id="MF_00575">
    <property type="entry name" value="LpxH"/>
    <property type="match status" value="1"/>
</dbReference>
<dbReference type="InterPro" id="IPR004843">
    <property type="entry name" value="Calcineurin-like_PHP_ApaH"/>
</dbReference>
<dbReference type="InterPro" id="IPR043461">
    <property type="entry name" value="LpxH-like"/>
</dbReference>
<dbReference type="InterPro" id="IPR029052">
    <property type="entry name" value="Metallo-depent_PP-like"/>
</dbReference>
<dbReference type="InterPro" id="IPR010138">
    <property type="entry name" value="UDP-diacylglucosamine_Hdrlase"/>
</dbReference>
<dbReference type="NCBIfam" id="TIGR01854">
    <property type="entry name" value="lipid_A_lpxH"/>
    <property type="match status" value="1"/>
</dbReference>
<dbReference type="NCBIfam" id="NF003743">
    <property type="entry name" value="PRK05340.1"/>
    <property type="match status" value="1"/>
</dbReference>
<dbReference type="PANTHER" id="PTHR34990:SF1">
    <property type="entry name" value="UDP-2,3-DIACYLGLUCOSAMINE HYDROLASE"/>
    <property type="match status" value="1"/>
</dbReference>
<dbReference type="PANTHER" id="PTHR34990">
    <property type="entry name" value="UDP-2,3-DIACYLGLUCOSAMINE HYDROLASE-RELATED"/>
    <property type="match status" value="1"/>
</dbReference>
<dbReference type="Pfam" id="PF00149">
    <property type="entry name" value="Metallophos"/>
    <property type="match status" value="1"/>
</dbReference>
<dbReference type="SUPFAM" id="SSF56300">
    <property type="entry name" value="Metallo-dependent phosphatases"/>
    <property type="match status" value="1"/>
</dbReference>
<organism>
    <name type="scientific">Chromobacterium violaceum (strain ATCC 12472 / DSM 30191 / JCM 1249 / CCUG 213 / NBRC 12614 / NCIMB 9131 / NCTC 9757 / MK)</name>
    <dbReference type="NCBI Taxonomy" id="243365"/>
    <lineage>
        <taxon>Bacteria</taxon>
        <taxon>Pseudomonadati</taxon>
        <taxon>Pseudomonadota</taxon>
        <taxon>Betaproteobacteria</taxon>
        <taxon>Neisseriales</taxon>
        <taxon>Chromobacteriaceae</taxon>
        <taxon>Chromobacterium</taxon>
    </lineage>
</organism>
<comment type="function">
    <text evidence="1">Hydrolyzes the pyrophosphate bond of UDP-2,3-diacylglucosamine to yield 2,3-diacylglucosamine 1-phosphate (lipid X) and UMP by catalyzing the attack of water at the alpha-P atom. Involved in the biosynthesis of lipid A, a phosphorylated glycolipid that anchors the lipopolysaccharide to the outer membrane of the cell.</text>
</comment>
<comment type="catalytic activity">
    <reaction evidence="1">
        <text>UDP-2-N,3-O-bis[(3R)-3-hydroxytetradecanoyl]-alpha-D-glucosamine + H2O = 2-N,3-O-bis[(3R)-3-hydroxytetradecanoyl]-alpha-D-glucosaminyl 1-phosphate + UMP + 2 H(+)</text>
        <dbReference type="Rhea" id="RHEA:25213"/>
        <dbReference type="ChEBI" id="CHEBI:15377"/>
        <dbReference type="ChEBI" id="CHEBI:15378"/>
        <dbReference type="ChEBI" id="CHEBI:57865"/>
        <dbReference type="ChEBI" id="CHEBI:57957"/>
        <dbReference type="ChEBI" id="CHEBI:78847"/>
        <dbReference type="EC" id="3.6.1.54"/>
    </reaction>
</comment>
<comment type="cofactor">
    <cofactor evidence="1">
        <name>Mn(2+)</name>
        <dbReference type="ChEBI" id="CHEBI:29035"/>
    </cofactor>
    <text evidence="1">Binds 2 Mn(2+) ions per subunit in a binuclear metal center.</text>
</comment>
<comment type="pathway">
    <text evidence="1">Glycolipid biosynthesis; lipid IV(A) biosynthesis; lipid IV(A) from (3R)-3-hydroxytetradecanoyl-[acyl-carrier-protein] and UDP-N-acetyl-alpha-D-glucosamine: step 4/6.</text>
</comment>
<comment type="subcellular location">
    <subcellularLocation>
        <location evidence="1">Cell inner membrane</location>
        <topology evidence="1">Peripheral membrane protein</topology>
        <orientation evidence="1">Cytoplasmic side</orientation>
    </subcellularLocation>
</comment>
<comment type="similarity">
    <text evidence="1">Belongs to the LpxH family.</text>
</comment>
<gene>
    <name evidence="1" type="primary">lpxH</name>
    <name type="ordered locus">CV_3186</name>
</gene>
<protein>
    <recommendedName>
        <fullName evidence="1">UDP-2,3-diacylglucosamine hydrolase</fullName>
        <ecNumber evidence="1">3.6.1.54</ecNumber>
    </recommendedName>
    <alternativeName>
        <fullName evidence="1">UDP-2,3-diacylglucosamine diphosphatase</fullName>
    </alternativeName>
</protein>